<comment type="function">
    <text evidence="2">Catalyzes the reversible reduction of methylene-H(4)MPT to methyl-H(4)MPT.</text>
</comment>
<comment type="catalytic activity">
    <reaction evidence="2">
        <text>5-methyl-5,6,7,8-tetrahydromethanopterin + oxidized coenzyme F420-(gamma-L-Glu)(n) + H(+) = 5,10-methylenetetrahydromethanopterin + reduced coenzyme F420-(gamma-L-Glu)(n)</text>
        <dbReference type="Rhea" id="RHEA:21144"/>
        <dbReference type="Rhea" id="RHEA-COMP:12939"/>
        <dbReference type="Rhea" id="RHEA-COMP:14378"/>
        <dbReference type="ChEBI" id="CHEBI:15378"/>
        <dbReference type="ChEBI" id="CHEBI:57818"/>
        <dbReference type="ChEBI" id="CHEBI:58116"/>
        <dbReference type="ChEBI" id="CHEBI:133980"/>
        <dbReference type="ChEBI" id="CHEBI:139511"/>
        <dbReference type="EC" id="1.5.98.2"/>
    </reaction>
</comment>
<comment type="activity regulation">
    <text evidence="2">Requires the presence of relatively high concentrations of either sulfate or phosphate for maximal activity.</text>
</comment>
<comment type="biophysicochemical properties">
    <kinetics>
        <KM evidence="2">6 uM for methylene-H(4)MPT</KM>
        <KM evidence="2">4 uM for reduced coenzyme F420</KM>
        <Vmax evidence="2">435.0 umol/min/mg enzyme (at 65 degrees Celsius and pH 6.8)</Vmax>
        <text evidence="2">kcat is 275 sec(-1).</text>
    </kinetics>
</comment>
<comment type="pathway">
    <text evidence="2">One-carbon metabolism; methanogenesis from CO(2); methyl-coenzyme M from 5,10-methylene-5,6,7,8-tetrahydromethanopterin: step 1/2.</text>
</comment>
<comment type="subunit">
    <text evidence="1">Homotetramer composed of two loosely associated dimers.</text>
</comment>
<comment type="subcellular location">
    <subcellularLocation>
        <location>Cytoplasm</location>
    </subcellularLocation>
</comment>
<comment type="similarity">
    <text evidence="4">Belongs to the mer family.</text>
</comment>
<gene>
    <name evidence="3" type="primary">mer</name>
    <name type="ordered locus">MK0524</name>
</gene>
<protein>
    <recommendedName>
        <fullName evidence="4">5,10-methylenetetrahydromethanopterin reductase</fullName>
        <ecNumber evidence="2">1.5.98.2</ecNumber>
    </recommendedName>
    <alternativeName>
        <fullName evidence="3">Coenzyme F420-dependent N(5),N(10)-methylenetetrahydromethanopterin reductase</fullName>
    </alternativeName>
    <alternativeName>
        <fullName evidence="4">Methylene-H(4)MPT reductase</fullName>
    </alternativeName>
</protein>
<evidence type="ECO:0000269" key="1">
    <source>
    </source>
</evidence>
<evidence type="ECO:0000269" key="2">
    <source>
    </source>
</evidence>
<evidence type="ECO:0000303" key="3">
    <source>
    </source>
</evidence>
<evidence type="ECO:0000305" key="4"/>
<evidence type="ECO:0007829" key="5">
    <source>
        <dbReference type="PDB" id="1EZW"/>
    </source>
</evidence>
<dbReference type="EC" id="1.5.98.2" evidence="2"/>
<dbReference type="EMBL" id="U31567">
    <property type="protein sequence ID" value="AAA92085.1"/>
    <property type="molecule type" value="Genomic_DNA"/>
</dbReference>
<dbReference type="EMBL" id="AE009439">
    <property type="protein sequence ID" value="AAM01739.1"/>
    <property type="molecule type" value="Genomic_DNA"/>
</dbReference>
<dbReference type="PDB" id="1EZW">
    <property type="method" value="X-ray"/>
    <property type="resolution" value="1.65 A"/>
    <property type="chains" value="A=1-349"/>
</dbReference>
<dbReference type="PDBsum" id="1EZW"/>
<dbReference type="SMR" id="Q8TXY4"/>
<dbReference type="FunCoup" id="Q8TXY4">
    <property type="interactions" value="63"/>
</dbReference>
<dbReference type="STRING" id="190192.MK0524"/>
<dbReference type="PaxDb" id="190192-MK0524"/>
<dbReference type="EnsemblBacteria" id="AAM01739">
    <property type="protein sequence ID" value="AAM01739"/>
    <property type="gene ID" value="MK0524"/>
</dbReference>
<dbReference type="KEGG" id="mka:MK0524"/>
<dbReference type="PATRIC" id="fig|190192.8.peg.558"/>
<dbReference type="HOGENOM" id="CLU_027853_5_3_2"/>
<dbReference type="InParanoid" id="Q8TXY4"/>
<dbReference type="BRENDA" id="1.5.98.2">
    <property type="organism ID" value="3274"/>
</dbReference>
<dbReference type="SABIO-RK" id="Q8TXY4"/>
<dbReference type="UniPathway" id="UPA00640">
    <property type="reaction ID" value="UER00697"/>
</dbReference>
<dbReference type="EvolutionaryTrace" id="Q8TXY4"/>
<dbReference type="Proteomes" id="UP000001826">
    <property type="component" value="Chromosome"/>
</dbReference>
<dbReference type="GO" id="GO:0005737">
    <property type="term" value="C:cytoplasm"/>
    <property type="evidence" value="ECO:0007669"/>
    <property type="project" value="UniProtKB-SubCell"/>
</dbReference>
<dbReference type="GO" id="GO:0018537">
    <property type="term" value="F:coenzyme F420-dependent N5,N10-methenyltetrahydromethanopterin reductase activity"/>
    <property type="evidence" value="ECO:0000314"/>
    <property type="project" value="MENGO"/>
</dbReference>
<dbReference type="GO" id="GO:0016705">
    <property type="term" value="F:oxidoreductase activity, acting on paired donors, with incorporation or reduction of molecular oxygen"/>
    <property type="evidence" value="ECO:0007669"/>
    <property type="project" value="InterPro"/>
</dbReference>
<dbReference type="GO" id="GO:0019386">
    <property type="term" value="P:methanogenesis, from carbon dioxide"/>
    <property type="evidence" value="ECO:0007669"/>
    <property type="project" value="UniProtKB-UniRule"/>
</dbReference>
<dbReference type="GO" id="GO:0006730">
    <property type="term" value="P:one-carbon metabolic process"/>
    <property type="evidence" value="ECO:0007669"/>
    <property type="project" value="UniProtKB-UniRule"/>
</dbReference>
<dbReference type="CDD" id="cd01097">
    <property type="entry name" value="Tetrahydromethanopterin_reductase"/>
    <property type="match status" value="1"/>
</dbReference>
<dbReference type="Gene3D" id="3.20.20.30">
    <property type="entry name" value="Luciferase-like domain"/>
    <property type="match status" value="1"/>
</dbReference>
<dbReference type="HAMAP" id="MF_01091">
    <property type="entry name" value="F420_mer"/>
    <property type="match status" value="1"/>
</dbReference>
<dbReference type="InterPro" id="IPR050564">
    <property type="entry name" value="F420-G6PD/mer"/>
</dbReference>
<dbReference type="InterPro" id="IPR011251">
    <property type="entry name" value="Luciferase-like_dom"/>
</dbReference>
<dbReference type="InterPro" id="IPR036661">
    <property type="entry name" value="Luciferase-like_sf"/>
</dbReference>
<dbReference type="InterPro" id="IPR019946">
    <property type="entry name" value="MeH4methanopterin_reductase"/>
</dbReference>
<dbReference type="NCBIfam" id="TIGR03555">
    <property type="entry name" value="F420_mer"/>
    <property type="match status" value="1"/>
</dbReference>
<dbReference type="NCBIfam" id="NF002619">
    <property type="entry name" value="PRK02271.1"/>
    <property type="match status" value="1"/>
</dbReference>
<dbReference type="PANTHER" id="PTHR43244">
    <property type="match status" value="1"/>
</dbReference>
<dbReference type="PANTHER" id="PTHR43244:SF1">
    <property type="entry name" value="5,10-METHYLENETETRAHYDROMETHANOPTERIN REDUCTASE"/>
    <property type="match status" value="1"/>
</dbReference>
<dbReference type="Pfam" id="PF00296">
    <property type="entry name" value="Bac_luciferase"/>
    <property type="match status" value="1"/>
</dbReference>
<dbReference type="SUPFAM" id="SSF51679">
    <property type="entry name" value="Bacterial luciferase-like"/>
    <property type="match status" value="1"/>
</dbReference>
<keyword id="KW-0002">3D-structure</keyword>
<keyword id="KW-0963">Cytoplasm</keyword>
<keyword id="KW-0903">Direct protein sequencing</keyword>
<keyword id="KW-0484">Methanogenesis</keyword>
<keyword id="KW-0554">One-carbon metabolism</keyword>
<keyword id="KW-0560">Oxidoreductase</keyword>
<keyword id="KW-1185">Reference proteome</keyword>
<name>MER_METKA</name>
<sequence length="349" mass="37501">MAEVSFGIELLPDDKPTKIAHLIKVAEDNGFEYAWICDHYNNYSYMGVLTLAAVITSKIKLGPGITNPYTRHPLITASNIATLDWISGGRAIIGMGPGDKATFDKMGLPFPCKIPIWNPEAEDEVGPATAIREVKEVIYQYLEGGPVEYEGKYVKTGTADVNARSIQGSDIPFYMGAQGPIMLKTAGEIADGVLVNASNPKDFEVAVPKIEEGAKEAGRSLDEIDVAAYTCFSIDKDEDKAIEATKIVVAFIVMGSPDVVLERHGIDTEKAEQIAEAIGKGDFGTAIGLVDEDMIEAFSIAGDPDTVVDKIEELLKAGVTQVVVGSPIGPDKEKAIELVGQEVIPHFKE</sequence>
<feature type="initiator methionine" description="Removed" evidence="2">
    <location>
        <position position="1"/>
    </location>
</feature>
<feature type="chain" id="PRO_0000084808" description="5,10-methylenetetrahydromethanopterin reductase">
    <location>
        <begin position="2"/>
        <end position="349"/>
    </location>
</feature>
<feature type="sequence conflict" description="In Ref. 3; AA sequence." evidence="4" ref="3">
    <original>H</original>
    <variation>A</variation>
    <location>
        <position position="21"/>
    </location>
</feature>
<feature type="sequence conflict" description="In Ref. 1; AAA92085." evidence="4" ref="1">
    <original>N</original>
    <variation>K</variation>
    <location>
        <position position="162"/>
    </location>
</feature>
<feature type="sequence conflict" description="In Ref. 1; AAA92085." evidence="4" ref="1">
    <original>D</original>
    <variation>N</variation>
    <location>
        <position position="191"/>
    </location>
</feature>
<feature type="sequence conflict" description="In Ref. 1; AAA92085." evidence="4" ref="1">
    <original>I</original>
    <variation>L</variation>
    <location>
        <position position="344"/>
    </location>
</feature>
<feature type="strand" evidence="5">
    <location>
        <begin position="5"/>
        <end position="10"/>
    </location>
</feature>
<feature type="helix" evidence="5">
    <location>
        <begin position="16"/>
        <end position="28"/>
    </location>
</feature>
<feature type="strand" evidence="5">
    <location>
        <begin position="33"/>
        <end position="36"/>
    </location>
</feature>
<feature type="helix" evidence="5">
    <location>
        <begin position="45"/>
        <end position="54"/>
    </location>
</feature>
<feature type="strand" evidence="5">
    <location>
        <begin position="57"/>
        <end position="66"/>
    </location>
</feature>
<feature type="strand" evidence="5">
    <location>
        <begin position="68"/>
        <end position="71"/>
    </location>
</feature>
<feature type="helix" evidence="5">
    <location>
        <begin position="73"/>
        <end position="86"/>
    </location>
</feature>
<feature type="strand" evidence="5">
    <location>
        <begin position="93"/>
        <end position="95"/>
    </location>
</feature>
<feature type="helix" evidence="5">
    <location>
        <begin position="100"/>
        <end position="106"/>
    </location>
</feature>
<feature type="helix" evidence="5">
    <location>
        <begin position="127"/>
        <end position="142"/>
    </location>
</feature>
<feature type="strand" evidence="5">
    <location>
        <begin position="152"/>
        <end position="155"/>
    </location>
</feature>
<feature type="helix" evidence="5">
    <location>
        <begin position="168"/>
        <end position="170"/>
    </location>
</feature>
<feature type="strand" evidence="5">
    <location>
        <begin position="173"/>
        <end position="176"/>
    </location>
</feature>
<feature type="helix" evidence="5">
    <location>
        <begin position="180"/>
        <end position="189"/>
    </location>
</feature>
<feature type="strand" evidence="5">
    <location>
        <begin position="191"/>
        <end position="196"/>
    </location>
</feature>
<feature type="helix" evidence="5">
    <location>
        <begin position="200"/>
        <end position="216"/>
    </location>
</feature>
<feature type="helix" evidence="5">
    <location>
        <begin position="221"/>
        <end position="223"/>
    </location>
</feature>
<feature type="strand" evidence="5">
    <location>
        <begin position="224"/>
        <end position="229"/>
    </location>
</feature>
<feature type="strand" evidence="5">
    <location>
        <begin position="232"/>
        <end position="234"/>
    </location>
</feature>
<feature type="helix" evidence="5">
    <location>
        <begin position="238"/>
        <end position="254"/>
    </location>
</feature>
<feature type="helix" evidence="5">
    <location>
        <begin position="258"/>
        <end position="263"/>
    </location>
</feature>
<feature type="turn" evidence="5">
    <location>
        <begin position="270"/>
        <end position="272"/>
    </location>
</feature>
<feature type="helix" evidence="5">
    <location>
        <begin position="273"/>
        <end position="277"/>
    </location>
</feature>
<feature type="turn" evidence="5">
    <location>
        <begin position="278"/>
        <end position="281"/>
    </location>
</feature>
<feature type="helix" evidence="5">
    <location>
        <begin position="283"/>
        <end position="289"/>
    </location>
</feature>
<feature type="helix" evidence="5">
    <location>
        <begin position="292"/>
        <end position="298"/>
    </location>
</feature>
<feature type="strand" evidence="5">
    <location>
        <begin position="300"/>
        <end position="303"/>
    </location>
</feature>
<feature type="helix" evidence="5">
    <location>
        <begin position="304"/>
        <end position="316"/>
    </location>
</feature>
<feature type="strand" evidence="5">
    <location>
        <begin position="321"/>
        <end position="324"/>
    </location>
</feature>
<feature type="helix" evidence="5">
    <location>
        <begin position="332"/>
        <end position="342"/>
    </location>
</feature>
<feature type="helix" evidence="5">
    <location>
        <begin position="344"/>
        <end position="346"/>
    </location>
</feature>
<proteinExistence type="evidence at protein level"/>
<accession>Q8TXY4</accession>
<accession>Q49598</accession>
<reference key="1">
    <citation type="journal article" date="1995" name="J. Bacteriol.">
        <title>Cloning, sequencing, and growth phase-dependent transcription of the coenzyme F420-dependent N5,N10-methylenetetrahydromethanopterin reductase-encoding genes from Methanobacterium thermoautotrophicum delta H and Methanopyrus kandleri.</title>
        <authorList>
            <person name="Noelling J."/>
            <person name="Pihl T.D."/>
            <person name="Reeve J.N."/>
        </authorList>
    </citation>
    <scope>NUCLEOTIDE SEQUENCE [GENOMIC DNA]</scope>
</reference>
<reference key="2">
    <citation type="journal article" date="2002" name="Proc. Natl. Acad. Sci. U.S.A.">
        <title>The complete genome of hyperthermophile Methanopyrus kandleri AV19 and monophyly of archaeal methanogens.</title>
        <authorList>
            <person name="Slesarev A.I."/>
            <person name="Mezhevaya K.V."/>
            <person name="Makarova K.S."/>
            <person name="Polushin N.N."/>
            <person name="Shcherbinina O.V."/>
            <person name="Shakhova V.V."/>
            <person name="Belova G.I."/>
            <person name="Aravind L."/>
            <person name="Natale D.A."/>
            <person name="Rogozin I.B."/>
            <person name="Tatusov R.L."/>
            <person name="Wolf Y.I."/>
            <person name="Stetter K.O."/>
            <person name="Malykh A.G."/>
            <person name="Koonin E.V."/>
            <person name="Kozyavkin S.A."/>
        </authorList>
    </citation>
    <scope>NUCLEOTIDE SEQUENCE [LARGE SCALE GENOMIC DNA]</scope>
    <source>
        <strain>AV19 / DSM 6324 / JCM 9639 / NBRC 100938</strain>
    </source>
</reference>
<reference key="3">
    <citation type="journal article" date="1991" name="Arch. Microbiol.">
        <title>Purification and properties of N5,N10-methylenetetrahydromethanopterin reductase (coenzyme F420-dependent) from the extreme thermophile Methanopyrus kandleri.</title>
        <authorList>
            <person name="Ma K."/>
            <person name="Linder D."/>
            <person name="Stetter K.O."/>
            <person name="Thauer R.K."/>
        </authorList>
    </citation>
    <scope>PROTEIN SEQUENCE OF 2-27</scope>
    <scope>FUNCTION</scope>
    <scope>CATALYTIC ACTIVITY</scope>
    <scope>ACTIVITY REGULATION</scope>
    <scope>BIOPHYSICOCHEMICAL PROPERTIES</scope>
    <scope>PATHWAY</scope>
    <source>
        <strain>AV19 / DSM 6324 / JCM 9639 / NBRC 100938</strain>
    </source>
</reference>
<reference key="4">
    <citation type="journal article" date="2000" name="J. Mol. Biol.">
        <title>Structure of coenzyme F(420) dependent methylenetetrahydromethanopterin reductase from two methanogenic archaea.</title>
        <authorList>
            <person name="Shima S."/>
            <person name="Warkentin E."/>
            <person name="Grabarse W."/>
            <person name="Sordel M."/>
            <person name="Wicke M."/>
            <person name="Thauer R.K."/>
            <person name="Ermler U."/>
        </authorList>
    </citation>
    <scope>X-RAY CRYSTALLOGRAPHY (1.65 ANGSTROMS)</scope>
    <scope>SUBUNIT</scope>
    <source>
        <strain>AV19 / DSM 6324 / JCM 9639 / NBRC 100938</strain>
    </source>
</reference>
<organism>
    <name type="scientific">Methanopyrus kandleri (strain AV19 / DSM 6324 / JCM 9639 / NBRC 100938)</name>
    <dbReference type="NCBI Taxonomy" id="190192"/>
    <lineage>
        <taxon>Archaea</taxon>
        <taxon>Methanobacteriati</taxon>
        <taxon>Methanobacteriota</taxon>
        <taxon>Methanomada group</taxon>
        <taxon>Methanopyri</taxon>
        <taxon>Methanopyrales</taxon>
        <taxon>Methanopyraceae</taxon>
        <taxon>Methanopyrus</taxon>
    </lineage>
</organism>